<name>H2AW_MOUSE</name>
<proteinExistence type="evidence at protein level"/>
<comment type="function">
    <text>Variant histone H2A which replaces conventional H2A in a subset of nucleosomes where it represses transcription. Nucleosomes wrap and compact DNA into chromatin, limiting DNA accessibility to the cellular machineries which require DNA as a template. Histones thereby play a central role in transcription regulation, DNA repair, DNA replication and chromosomal stability. DNA accessibility is regulated via a complex set of post-translational modifications of histones, also called histone code, and nucleosome remodeling. May be involved in stable X chromosome inactivation.</text>
</comment>
<comment type="subunit">
    <text>The nucleosome is a histone octamer containing two molecules each of H2A, H2B, H3 and H4 assembled in one H3-H4 heterotetramer and two H2A-H2B heterodimers.</text>
</comment>
<comment type="subcellular location">
    <subcellularLocation>
        <location evidence="5">Nucleus</location>
    </subcellularLocation>
    <subcellularLocation>
        <location evidence="5">Chromosome</location>
    </subcellularLocation>
    <text>Enriched in inactive X chromosome chromatin and in senescence-associated heterochromatin.</text>
</comment>
<comment type="tissue specificity">
    <text evidence="5">Present in liver, kidney and adrenal gland (at protein level). In the liver, present in cells of the bile ducts and parenchymal cells, but not in hepatocytes. In the kidney, present in proximal and distal convoluted tubules and in glomeruli. Present at highest levels in the parietal layer of Bowman capsule. In the adrenal gland, present in the outer cells of the capsule.</text>
</comment>
<gene>
    <name evidence="7" type="primary">Macroh2a2</name>
    <name evidence="7" type="synonym">H2afy2</name>
    <name type="synonym">H2afy3</name>
</gene>
<keyword id="KW-0156">Chromatin regulator</keyword>
<keyword id="KW-0158">Chromosome</keyword>
<keyword id="KW-0238">DNA-binding</keyword>
<keyword id="KW-1017">Isopeptide bond</keyword>
<keyword id="KW-0544">Nucleosome core</keyword>
<keyword id="KW-0539">Nucleus</keyword>
<keyword id="KW-1185">Reference proteome</keyword>
<keyword id="KW-0832">Ubl conjugation</keyword>
<reference key="1">
    <citation type="journal article" date="2001" name="Hum. Mol. Genet.">
        <title>Histone H2A variants and the inactive X chromosome: identification of a second macroH2A variant.</title>
        <authorList>
            <person name="Chadwick B.P."/>
            <person name="Willard H.F."/>
        </authorList>
    </citation>
    <scope>NUCLEOTIDE SEQUENCE [MRNA]</scope>
    <source>
        <strain>C57BL/6J</strain>
    </source>
</reference>
<reference key="2">
    <citation type="journal article" date="2005" name="Science">
        <title>The transcriptional landscape of the mammalian genome.</title>
        <authorList>
            <person name="Carninci P."/>
            <person name="Kasukawa T."/>
            <person name="Katayama S."/>
            <person name="Gough J."/>
            <person name="Frith M.C."/>
            <person name="Maeda N."/>
            <person name="Oyama R."/>
            <person name="Ravasi T."/>
            <person name="Lenhard B."/>
            <person name="Wells C."/>
            <person name="Kodzius R."/>
            <person name="Shimokawa K."/>
            <person name="Bajic V.B."/>
            <person name="Brenner S.E."/>
            <person name="Batalov S."/>
            <person name="Forrest A.R."/>
            <person name="Zavolan M."/>
            <person name="Davis M.J."/>
            <person name="Wilming L.G."/>
            <person name="Aidinis V."/>
            <person name="Allen J.E."/>
            <person name="Ambesi-Impiombato A."/>
            <person name="Apweiler R."/>
            <person name="Aturaliya R.N."/>
            <person name="Bailey T.L."/>
            <person name="Bansal M."/>
            <person name="Baxter L."/>
            <person name="Beisel K.W."/>
            <person name="Bersano T."/>
            <person name="Bono H."/>
            <person name="Chalk A.M."/>
            <person name="Chiu K.P."/>
            <person name="Choudhary V."/>
            <person name="Christoffels A."/>
            <person name="Clutterbuck D.R."/>
            <person name="Crowe M.L."/>
            <person name="Dalla E."/>
            <person name="Dalrymple B.P."/>
            <person name="de Bono B."/>
            <person name="Della Gatta G."/>
            <person name="di Bernardo D."/>
            <person name="Down T."/>
            <person name="Engstrom P."/>
            <person name="Fagiolini M."/>
            <person name="Faulkner G."/>
            <person name="Fletcher C.F."/>
            <person name="Fukushima T."/>
            <person name="Furuno M."/>
            <person name="Futaki S."/>
            <person name="Gariboldi M."/>
            <person name="Georgii-Hemming P."/>
            <person name="Gingeras T.R."/>
            <person name="Gojobori T."/>
            <person name="Green R.E."/>
            <person name="Gustincich S."/>
            <person name="Harbers M."/>
            <person name="Hayashi Y."/>
            <person name="Hensch T.K."/>
            <person name="Hirokawa N."/>
            <person name="Hill D."/>
            <person name="Huminiecki L."/>
            <person name="Iacono M."/>
            <person name="Ikeo K."/>
            <person name="Iwama A."/>
            <person name="Ishikawa T."/>
            <person name="Jakt M."/>
            <person name="Kanapin A."/>
            <person name="Katoh M."/>
            <person name="Kawasawa Y."/>
            <person name="Kelso J."/>
            <person name="Kitamura H."/>
            <person name="Kitano H."/>
            <person name="Kollias G."/>
            <person name="Krishnan S.P."/>
            <person name="Kruger A."/>
            <person name="Kummerfeld S.K."/>
            <person name="Kurochkin I.V."/>
            <person name="Lareau L.F."/>
            <person name="Lazarevic D."/>
            <person name="Lipovich L."/>
            <person name="Liu J."/>
            <person name="Liuni S."/>
            <person name="McWilliam S."/>
            <person name="Madan Babu M."/>
            <person name="Madera M."/>
            <person name="Marchionni L."/>
            <person name="Matsuda H."/>
            <person name="Matsuzawa S."/>
            <person name="Miki H."/>
            <person name="Mignone F."/>
            <person name="Miyake S."/>
            <person name="Morris K."/>
            <person name="Mottagui-Tabar S."/>
            <person name="Mulder N."/>
            <person name="Nakano N."/>
            <person name="Nakauchi H."/>
            <person name="Ng P."/>
            <person name="Nilsson R."/>
            <person name="Nishiguchi S."/>
            <person name="Nishikawa S."/>
            <person name="Nori F."/>
            <person name="Ohara O."/>
            <person name="Okazaki Y."/>
            <person name="Orlando V."/>
            <person name="Pang K.C."/>
            <person name="Pavan W.J."/>
            <person name="Pavesi G."/>
            <person name="Pesole G."/>
            <person name="Petrovsky N."/>
            <person name="Piazza S."/>
            <person name="Reed J."/>
            <person name="Reid J.F."/>
            <person name="Ring B.Z."/>
            <person name="Ringwald M."/>
            <person name="Rost B."/>
            <person name="Ruan Y."/>
            <person name="Salzberg S.L."/>
            <person name="Sandelin A."/>
            <person name="Schneider C."/>
            <person name="Schoenbach C."/>
            <person name="Sekiguchi K."/>
            <person name="Semple C.A."/>
            <person name="Seno S."/>
            <person name="Sessa L."/>
            <person name="Sheng Y."/>
            <person name="Shibata Y."/>
            <person name="Shimada H."/>
            <person name="Shimada K."/>
            <person name="Silva D."/>
            <person name="Sinclair B."/>
            <person name="Sperling S."/>
            <person name="Stupka E."/>
            <person name="Sugiura K."/>
            <person name="Sultana R."/>
            <person name="Takenaka Y."/>
            <person name="Taki K."/>
            <person name="Tammoja K."/>
            <person name="Tan S.L."/>
            <person name="Tang S."/>
            <person name="Taylor M.S."/>
            <person name="Tegner J."/>
            <person name="Teichmann S.A."/>
            <person name="Ueda H.R."/>
            <person name="van Nimwegen E."/>
            <person name="Verardo R."/>
            <person name="Wei C.L."/>
            <person name="Yagi K."/>
            <person name="Yamanishi H."/>
            <person name="Zabarovsky E."/>
            <person name="Zhu S."/>
            <person name="Zimmer A."/>
            <person name="Hide W."/>
            <person name="Bult C."/>
            <person name="Grimmond S.M."/>
            <person name="Teasdale R.D."/>
            <person name="Liu E.T."/>
            <person name="Brusic V."/>
            <person name="Quackenbush J."/>
            <person name="Wahlestedt C."/>
            <person name="Mattick J.S."/>
            <person name="Hume D.A."/>
            <person name="Kai C."/>
            <person name="Sasaki D."/>
            <person name="Tomaru Y."/>
            <person name="Fukuda S."/>
            <person name="Kanamori-Katayama M."/>
            <person name="Suzuki M."/>
            <person name="Aoki J."/>
            <person name="Arakawa T."/>
            <person name="Iida J."/>
            <person name="Imamura K."/>
            <person name="Itoh M."/>
            <person name="Kato T."/>
            <person name="Kawaji H."/>
            <person name="Kawagashira N."/>
            <person name="Kawashima T."/>
            <person name="Kojima M."/>
            <person name="Kondo S."/>
            <person name="Konno H."/>
            <person name="Nakano K."/>
            <person name="Ninomiya N."/>
            <person name="Nishio T."/>
            <person name="Okada M."/>
            <person name="Plessy C."/>
            <person name="Shibata K."/>
            <person name="Shiraki T."/>
            <person name="Suzuki S."/>
            <person name="Tagami M."/>
            <person name="Waki K."/>
            <person name="Watahiki A."/>
            <person name="Okamura-Oho Y."/>
            <person name="Suzuki H."/>
            <person name="Kawai J."/>
            <person name="Hayashizaki Y."/>
        </authorList>
    </citation>
    <scope>NUCLEOTIDE SEQUENCE [LARGE SCALE MRNA]</scope>
    <source>
        <strain>C57BL/6J</strain>
        <tissue>Cerebellum</tissue>
    </source>
</reference>
<reference key="3">
    <citation type="journal article" date="2004" name="Genome Res.">
        <title>The status, quality, and expansion of the NIH full-length cDNA project: the Mammalian Gene Collection (MGC).</title>
        <authorList>
            <consortium name="The MGC Project Team"/>
        </authorList>
    </citation>
    <scope>NUCLEOTIDE SEQUENCE [LARGE SCALE MRNA]</scope>
    <source>
        <strain>C57BL/6J</strain>
        <tissue>Brain</tissue>
        <tissue>Olfactory epithelium</tissue>
    </source>
</reference>
<reference key="4">
    <citation type="journal article" date="2001" name="J. Biol. Chem.">
        <title>MACROH2A2, a new member of the MACROH2A core histone family.</title>
        <authorList>
            <person name="Costanzi C."/>
            <person name="Pehrson J.R."/>
        </authorList>
    </citation>
    <scope>TISSUE SPECIFICITY</scope>
    <scope>SUBCELLULAR LOCATION</scope>
</reference>
<reference key="5">
    <citation type="journal article" date="2010" name="Cell">
        <title>A tissue-specific atlas of mouse protein phosphorylation and expression.</title>
        <authorList>
            <person name="Huttlin E.L."/>
            <person name="Jedrychowski M.P."/>
            <person name="Elias J.E."/>
            <person name="Goswami T."/>
            <person name="Rad R."/>
            <person name="Beausoleil S.A."/>
            <person name="Villen J."/>
            <person name="Haas W."/>
            <person name="Sowa M.E."/>
            <person name="Gygi S.P."/>
        </authorList>
    </citation>
    <scope>IDENTIFICATION BY MASS SPECTROMETRY [LARGE SCALE ANALYSIS]</scope>
    <source>
        <tissue>Kidney</tissue>
    </source>
</reference>
<protein>
    <recommendedName>
        <fullName>Core histone macro-H2A.2</fullName>
        <shortName>Histone macroH2A2</shortName>
        <shortName>mH2A2</shortName>
    </recommendedName>
</protein>
<organism>
    <name type="scientific">Mus musculus</name>
    <name type="common">Mouse</name>
    <dbReference type="NCBI Taxonomy" id="10090"/>
    <lineage>
        <taxon>Eukaryota</taxon>
        <taxon>Metazoa</taxon>
        <taxon>Chordata</taxon>
        <taxon>Craniata</taxon>
        <taxon>Vertebrata</taxon>
        <taxon>Euteleostomi</taxon>
        <taxon>Mammalia</taxon>
        <taxon>Eutheria</taxon>
        <taxon>Euarchontoglires</taxon>
        <taxon>Glires</taxon>
        <taxon>Rodentia</taxon>
        <taxon>Myomorpha</taxon>
        <taxon>Muroidea</taxon>
        <taxon>Muridae</taxon>
        <taxon>Murinae</taxon>
        <taxon>Mus</taxon>
        <taxon>Mus</taxon>
    </lineage>
</organism>
<accession>Q8CCK0</accession>
<accession>A0JP36</accession>
<accession>Q3TNT4</accession>
<accession>Q925I6</accession>
<dbReference type="EMBL" id="AF336305">
    <property type="protein sequence ID" value="AAK52472.1"/>
    <property type="molecule type" value="mRNA"/>
</dbReference>
<dbReference type="EMBL" id="AK032636">
    <property type="protein sequence ID" value="BAC27963.1"/>
    <property type="molecule type" value="mRNA"/>
</dbReference>
<dbReference type="EMBL" id="AK165020">
    <property type="protein sequence ID" value="BAE38003.1"/>
    <property type="molecule type" value="mRNA"/>
</dbReference>
<dbReference type="EMBL" id="BC045140">
    <property type="protein sequence ID" value="AAH45140.1"/>
    <property type="molecule type" value="mRNA"/>
</dbReference>
<dbReference type="EMBL" id="BC046794">
    <property type="protein sequence ID" value="AAH46794.1"/>
    <property type="molecule type" value="mRNA"/>
</dbReference>
<dbReference type="EMBL" id="BC107279">
    <property type="protein sequence ID" value="AAI07280.1"/>
    <property type="molecule type" value="mRNA"/>
</dbReference>
<dbReference type="EMBL" id="BC107280">
    <property type="protein sequence ID" value="AAI07281.1"/>
    <property type="molecule type" value="mRNA"/>
</dbReference>
<dbReference type="EMBL" id="BC127144">
    <property type="protein sequence ID" value="AAI27145.1"/>
    <property type="molecule type" value="mRNA"/>
</dbReference>
<dbReference type="CCDS" id="CCDS23885.1"/>
<dbReference type="RefSeq" id="NP_996883.1">
    <property type="nucleotide sequence ID" value="NM_207000.2"/>
</dbReference>
<dbReference type="SMR" id="Q8CCK0"/>
<dbReference type="BioGRID" id="240403">
    <property type="interactions" value="2"/>
</dbReference>
<dbReference type="FunCoup" id="Q8CCK0">
    <property type="interactions" value="810"/>
</dbReference>
<dbReference type="IntAct" id="Q8CCK0">
    <property type="interactions" value="4"/>
</dbReference>
<dbReference type="MINT" id="Q8CCK0"/>
<dbReference type="STRING" id="10090.ENSMUSP00000020283"/>
<dbReference type="iPTMnet" id="Q8CCK0"/>
<dbReference type="PhosphoSitePlus" id="Q8CCK0"/>
<dbReference type="CPTAC" id="non-CPTAC-3795"/>
<dbReference type="jPOST" id="Q8CCK0"/>
<dbReference type="PaxDb" id="10090-ENSMUSP00000020283"/>
<dbReference type="PeptideAtlas" id="Q8CCK0"/>
<dbReference type="ProteomicsDB" id="270914"/>
<dbReference type="Pumba" id="Q8CCK0"/>
<dbReference type="Antibodypedia" id="28963">
    <property type="antibodies" value="356 antibodies from 23 providers"/>
</dbReference>
<dbReference type="DNASU" id="404634"/>
<dbReference type="Ensembl" id="ENSMUST00000020283.5">
    <property type="protein sequence ID" value="ENSMUSP00000020283.5"/>
    <property type="gene ID" value="ENSMUSG00000020086.7"/>
</dbReference>
<dbReference type="GeneID" id="404634"/>
<dbReference type="KEGG" id="mmu:404634"/>
<dbReference type="UCSC" id="uc007fgm.1">
    <property type="organism name" value="mouse"/>
</dbReference>
<dbReference type="AGR" id="MGI:3037658"/>
<dbReference type="CTD" id="55506"/>
<dbReference type="MGI" id="MGI:3037658">
    <property type="gene designation" value="Macroh2a2"/>
</dbReference>
<dbReference type="VEuPathDB" id="HostDB:ENSMUSG00000020086"/>
<dbReference type="eggNOG" id="KOG1756">
    <property type="taxonomic scope" value="Eukaryota"/>
</dbReference>
<dbReference type="eggNOG" id="KOG2633">
    <property type="taxonomic scope" value="Eukaryota"/>
</dbReference>
<dbReference type="GeneTree" id="ENSGT00940000158120"/>
<dbReference type="HOGENOM" id="CLU_062828_0_0_1"/>
<dbReference type="InParanoid" id="Q8CCK0"/>
<dbReference type="OMA" id="LVLGQKX"/>
<dbReference type="OrthoDB" id="9421954at2759"/>
<dbReference type="PhylomeDB" id="Q8CCK0"/>
<dbReference type="TreeFam" id="TF332276"/>
<dbReference type="BioGRID-ORCS" id="404634">
    <property type="hits" value="2 hits in 78 CRISPR screens"/>
</dbReference>
<dbReference type="ChiTaRS" id="H2afy2">
    <property type="organism name" value="mouse"/>
</dbReference>
<dbReference type="PRO" id="PR:Q8CCK0"/>
<dbReference type="Proteomes" id="UP000000589">
    <property type="component" value="Chromosome 10"/>
</dbReference>
<dbReference type="RNAct" id="Q8CCK0">
    <property type="molecule type" value="protein"/>
</dbReference>
<dbReference type="Bgee" id="ENSMUSG00000020086">
    <property type="expression patterns" value="Expressed in undifferentiated genital tubercle and 223 other cell types or tissues"/>
</dbReference>
<dbReference type="GO" id="GO:0001740">
    <property type="term" value="C:Barr body"/>
    <property type="evidence" value="ECO:0000266"/>
    <property type="project" value="MGI"/>
</dbReference>
<dbReference type="GO" id="GO:0005654">
    <property type="term" value="C:nucleoplasm"/>
    <property type="evidence" value="ECO:0007669"/>
    <property type="project" value="Ensembl"/>
</dbReference>
<dbReference type="GO" id="GO:0000786">
    <property type="term" value="C:nucleosome"/>
    <property type="evidence" value="ECO:0007669"/>
    <property type="project" value="UniProtKB-KW"/>
</dbReference>
<dbReference type="GO" id="GO:0031490">
    <property type="term" value="F:chromatin DNA binding"/>
    <property type="evidence" value="ECO:0007669"/>
    <property type="project" value="Ensembl"/>
</dbReference>
<dbReference type="GO" id="GO:0046982">
    <property type="term" value="F:protein heterodimerization activity"/>
    <property type="evidence" value="ECO:0007669"/>
    <property type="project" value="InterPro"/>
</dbReference>
<dbReference type="GO" id="GO:0000977">
    <property type="term" value="F:RNA polymerase II transcription regulatory region sequence-specific DNA binding"/>
    <property type="evidence" value="ECO:0007669"/>
    <property type="project" value="Ensembl"/>
</dbReference>
<dbReference type="GO" id="GO:0030527">
    <property type="term" value="F:structural constituent of chromatin"/>
    <property type="evidence" value="ECO:0007669"/>
    <property type="project" value="InterPro"/>
</dbReference>
<dbReference type="GO" id="GO:0007420">
    <property type="term" value="P:brain development"/>
    <property type="evidence" value="ECO:0007669"/>
    <property type="project" value="Ensembl"/>
</dbReference>
<dbReference type="GO" id="GO:0071169">
    <property type="term" value="P:establishment of protein localization to chromatin"/>
    <property type="evidence" value="ECO:0007669"/>
    <property type="project" value="Ensembl"/>
</dbReference>
<dbReference type="GO" id="GO:0045814">
    <property type="term" value="P:negative regulation of gene expression, epigenetic"/>
    <property type="evidence" value="ECO:0007669"/>
    <property type="project" value="Ensembl"/>
</dbReference>
<dbReference type="GO" id="GO:0000122">
    <property type="term" value="P:negative regulation of transcription by RNA polymerase II"/>
    <property type="evidence" value="ECO:0000316"/>
    <property type="project" value="MGI"/>
</dbReference>
<dbReference type="GO" id="GO:1901837">
    <property type="term" value="P:negative regulation of transcription of nucleolar large rRNA by RNA polymerase I"/>
    <property type="evidence" value="ECO:0007669"/>
    <property type="project" value="Ensembl"/>
</dbReference>
<dbReference type="GO" id="GO:0006334">
    <property type="term" value="P:nucleosome assembly"/>
    <property type="evidence" value="ECO:0007669"/>
    <property type="project" value="InterPro"/>
</dbReference>
<dbReference type="GO" id="GO:0045618">
    <property type="term" value="P:positive regulation of keratinocyte differentiation"/>
    <property type="evidence" value="ECO:0007669"/>
    <property type="project" value="Ensembl"/>
</dbReference>
<dbReference type="GO" id="GO:0007549">
    <property type="term" value="P:sex-chromosome dosage compensation"/>
    <property type="evidence" value="ECO:0000266"/>
    <property type="project" value="MGI"/>
</dbReference>
<dbReference type="CDD" id="cd00074">
    <property type="entry name" value="HFD_H2A"/>
    <property type="match status" value="1"/>
</dbReference>
<dbReference type="CDD" id="cd02904">
    <property type="entry name" value="Macro_H2A-like"/>
    <property type="match status" value="1"/>
</dbReference>
<dbReference type="FunFam" id="1.10.20.10:FF:000013">
    <property type="entry name" value="Core histone macro-H2A"/>
    <property type="match status" value="1"/>
</dbReference>
<dbReference type="FunFam" id="3.40.220.10:FF:000002">
    <property type="entry name" value="Core histone macro-H2A"/>
    <property type="match status" value="1"/>
</dbReference>
<dbReference type="Gene3D" id="1.10.20.10">
    <property type="entry name" value="Histone, subunit A"/>
    <property type="match status" value="1"/>
</dbReference>
<dbReference type="Gene3D" id="3.40.220.10">
    <property type="entry name" value="Leucine Aminopeptidase, subunit E, domain 1"/>
    <property type="match status" value="1"/>
</dbReference>
<dbReference type="InterPro" id="IPR021171">
    <property type="entry name" value="Core_histone_macro-H2A"/>
</dbReference>
<dbReference type="InterPro" id="IPR009072">
    <property type="entry name" value="Histone-fold"/>
</dbReference>
<dbReference type="InterPro" id="IPR002119">
    <property type="entry name" value="Histone_H2A"/>
</dbReference>
<dbReference type="InterPro" id="IPR007125">
    <property type="entry name" value="Histone_H2A/H2B/H3"/>
</dbReference>
<dbReference type="InterPro" id="IPR032454">
    <property type="entry name" value="Histone_H2A_C"/>
</dbReference>
<dbReference type="InterPro" id="IPR002589">
    <property type="entry name" value="Macro_dom"/>
</dbReference>
<dbReference type="InterPro" id="IPR043472">
    <property type="entry name" value="Macro_dom-like"/>
</dbReference>
<dbReference type="InterPro" id="IPR035796">
    <property type="entry name" value="Macro_H2A"/>
</dbReference>
<dbReference type="PANTHER" id="PTHR23430">
    <property type="entry name" value="HISTONE H2A"/>
    <property type="match status" value="1"/>
</dbReference>
<dbReference type="Pfam" id="PF00125">
    <property type="entry name" value="Histone"/>
    <property type="match status" value="1"/>
</dbReference>
<dbReference type="Pfam" id="PF16211">
    <property type="entry name" value="Histone_H2A_C"/>
    <property type="match status" value="1"/>
</dbReference>
<dbReference type="Pfam" id="PF01661">
    <property type="entry name" value="Macro"/>
    <property type="match status" value="1"/>
</dbReference>
<dbReference type="PIRSF" id="PIRSF037942">
    <property type="entry name" value="Core_histone_macro-H2A"/>
    <property type="match status" value="1"/>
</dbReference>
<dbReference type="PRINTS" id="PR00620">
    <property type="entry name" value="HISTONEH2A"/>
</dbReference>
<dbReference type="SMART" id="SM00506">
    <property type="entry name" value="A1pp"/>
    <property type="match status" value="1"/>
</dbReference>
<dbReference type="SMART" id="SM00414">
    <property type="entry name" value="H2A"/>
    <property type="match status" value="1"/>
</dbReference>
<dbReference type="SUPFAM" id="SSF47113">
    <property type="entry name" value="Histone-fold"/>
    <property type="match status" value="1"/>
</dbReference>
<dbReference type="SUPFAM" id="SSF52949">
    <property type="entry name" value="Macro domain-like"/>
    <property type="match status" value="1"/>
</dbReference>
<dbReference type="PROSITE" id="PS51154">
    <property type="entry name" value="MACRO"/>
    <property type="match status" value="1"/>
</dbReference>
<evidence type="ECO:0000250" key="1">
    <source>
        <dbReference type="UniProtKB" id="P0C0S5"/>
    </source>
</evidence>
<evidence type="ECO:0000250" key="2">
    <source>
        <dbReference type="UniProtKB" id="Q9P0M6"/>
    </source>
</evidence>
<evidence type="ECO:0000255" key="3">
    <source>
        <dbReference type="PROSITE-ProRule" id="PRU00490"/>
    </source>
</evidence>
<evidence type="ECO:0000256" key="4">
    <source>
        <dbReference type="SAM" id="MobiDB-lite"/>
    </source>
</evidence>
<evidence type="ECO:0000269" key="5">
    <source>
    </source>
</evidence>
<evidence type="ECO:0000305" key="6"/>
<evidence type="ECO:0000312" key="7">
    <source>
        <dbReference type="MGI" id="MGI:3037658"/>
    </source>
</evidence>
<feature type="chain" id="PRO_0000227906" description="Core histone macro-H2A.2">
    <location>
        <begin position="1"/>
        <end position="372"/>
    </location>
</feature>
<feature type="domain" description="Histone H2A">
    <location>
        <begin position="2"/>
        <end position="117"/>
    </location>
</feature>
<feature type="domain" description="Macro" evidence="3">
    <location>
        <begin position="184"/>
        <end position="370"/>
    </location>
</feature>
<feature type="region of interest" description="Disordered" evidence="4">
    <location>
        <begin position="114"/>
        <end position="182"/>
    </location>
</feature>
<feature type="compositionally biased region" description="Basic residues" evidence="4">
    <location>
        <begin position="135"/>
        <end position="161"/>
    </location>
</feature>
<feature type="modified residue" description="N6-lactoyllysine; alternate" evidence="1">
    <location>
        <position position="7"/>
    </location>
</feature>
<feature type="modified residue" description="N6-lactoyllysine; alternate" evidence="1">
    <location>
        <position position="9"/>
    </location>
</feature>
<feature type="cross-link" description="Glycyl lysine isopeptide (Lys-Gly) (interchain with G-Cter in SUMO2)" evidence="2">
    <location>
        <position position="239"/>
    </location>
</feature>
<feature type="sequence conflict" description="In Ref. 2; BAC27963." evidence="6" ref="2">
    <original>E</original>
    <variation>D</variation>
    <location>
        <position position="90"/>
    </location>
</feature>
<feature type="sequence conflict" description="In Ref. 2; BAE38003." evidence="6" ref="2">
    <original>K</original>
    <variation>E</variation>
    <location>
        <position position="239"/>
    </location>
</feature>
<sequence length="372" mass="40092">MSGRSGKKKMSKLSRSARAGVIFPVGRLMRYLKKGTFKYRISVGAPVYMAAVIEYLAAEILELAGNAARDNKKARIAPRHILLAVANDEELNQLLKGVTIASGGVLPRIHPELLAKKRGTKGKSETILSPPPEKRGRKAASGKKGGKKSKATKPRTSKKSKAKDSDKEGTSNSTSEDGPGDGFTILSSKSLVLGQKLSLTQSDISHIGSMRVEGIVHPTTAEIDLKEEIGKALEKAGGKEFLETVKELRKSQGPLEVAEAAVSQSSGLAAKFVIHCHIPQWGSDKCEEQLEETIKNCLSAAEDKKLKSVAFPPFPSGRNCFPKQTAAQVTLKAISAHFDDSSSSSLKNVYFLLFDSESIGIYVQEMAKLDTK</sequence>